<keyword id="KW-0903">Direct protein sequencing</keyword>
<keyword id="KW-0378">Hydrolase</keyword>
<keyword id="KW-0611">Plant defense</keyword>
<keyword id="KW-0652">Protein synthesis inhibitor</keyword>
<keyword id="KW-0800">Toxin</keyword>
<organism>
    <name type="scientific">Gypsophila vaccaria</name>
    <name type="common">Cow soapwort</name>
    <name type="synonym">Saponaria vaccaria</name>
    <dbReference type="NCBI Taxonomy" id="39387"/>
    <lineage>
        <taxon>Eukaryota</taxon>
        <taxon>Viridiplantae</taxon>
        <taxon>Streptophyta</taxon>
        <taxon>Embryophyta</taxon>
        <taxon>Tracheophyta</taxon>
        <taxon>Spermatophyta</taxon>
        <taxon>Magnoliopsida</taxon>
        <taxon>eudicotyledons</taxon>
        <taxon>Gunneridae</taxon>
        <taxon>Pentapetalae</taxon>
        <taxon>Caryophyllales</taxon>
        <taxon>Caryophyllaceae</taxon>
        <taxon>Caryophylleae</taxon>
        <taxon>Gypsophila</taxon>
    </lineage>
</organism>
<comment type="function">
    <text evidence="1 2 3">Exhibits N-glycosylase activity (PubMed:35878187). Catalyzes the release of one adenine from a ribosome (PubMed:35878187). Acts as a ribosome-inactivating protein and inhibits protein synthesis (By similarity). Induces cell death in Huh-7 liver cells (PubMed:35878187). May contribute to the protection against plant pests and predators or play a role in regulating the death of plant cells (PubMed:35878187).</text>
</comment>
<comment type="catalytic activity">
    <reaction evidence="2">
        <text>Endohydrolysis of the N-glycosidic bond at one specific adenosine on the 28S rRNA.</text>
        <dbReference type="EC" id="3.2.2.22"/>
    </reaction>
</comment>
<comment type="tissue specificity">
    <text evidence="2">Expressed in seeds; most abundant in the perisperm.</text>
</comment>
<comment type="mass spectrometry" mass="28.793" method="Electrospray" evidence="2"/>
<comment type="miscellaneous">
    <text evidence="2">Thermostable at 68.9 degrees Celsius.</text>
</comment>
<comment type="similarity">
    <text evidence="4">Belongs to the ribosome-inactivating protein family. Type 1 RIP subfamily.</text>
</comment>
<evidence type="ECO:0000250" key="1">
    <source>
        <dbReference type="UniProtKB" id="Q7M1L6"/>
    </source>
</evidence>
<evidence type="ECO:0000269" key="2">
    <source>
    </source>
</evidence>
<evidence type="ECO:0000303" key="3">
    <source>
    </source>
</evidence>
<evidence type="ECO:0000305" key="4"/>
<sequence length="254" mass="28740">VVTITLNLANPSKGQYSSFVDRIRNNVRDPKLKYGGTDIAVIGAPPTREKYLRINLQGPRGTVSLGLRRENLYVVAYLAMDNTNTNKAYYFRNQITSAELRTVFPEATATNQIVIQYGEDYQSIERNAQITQGSQSRKELGLGIDLLVTSIDGVNRKARVVRNEARFLLIAIQMTAEAARFRYIQNLVTFNFPKKFDSDNKVIQFEVSWGKISRAIYGDCKNGVFNKDYDFGFGKVRQAKQLQMGLLMYLGRPG</sequence>
<accession>C0HM39</accession>
<dbReference type="EC" id="3.2.2.22" evidence="2"/>
<dbReference type="PIR" id="S69125">
    <property type="entry name" value="S69125"/>
</dbReference>
<dbReference type="SMR" id="C0HM39"/>
<dbReference type="GO" id="GO:0030598">
    <property type="term" value="F:rRNA N-glycosylase activity"/>
    <property type="evidence" value="ECO:0007669"/>
    <property type="project" value="InterPro"/>
</dbReference>
<dbReference type="GO" id="GO:0090729">
    <property type="term" value="F:toxin activity"/>
    <property type="evidence" value="ECO:0007669"/>
    <property type="project" value="UniProtKB-KW"/>
</dbReference>
<dbReference type="GO" id="GO:0006952">
    <property type="term" value="P:defense response"/>
    <property type="evidence" value="ECO:0007669"/>
    <property type="project" value="UniProtKB-KW"/>
</dbReference>
<dbReference type="GO" id="GO:0017148">
    <property type="term" value="P:negative regulation of translation"/>
    <property type="evidence" value="ECO:0007669"/>
    <property type="project" value="UniProtKB-KW"/>
</dbReference>
<dbReference type="Gene3D" id="3.40.420.10">
    <property type="entry name" value="Ricin (A subunit), domain 1"/>
    <property type="match status" value="1"/>
</dbReference>
<dbReference type="Gene3D" id="4.10.470.10">
    <property type="entry name" value="Ricin (A Subunit), domain 2"/>
    <property type="match status" value="1"/>
</dbReference>
<dbReference type="InterPro" id="IPR036041">
    <property type="entry name" value="Ribosome-inact_prot_sf"/>
</dbReference>
<dbReference type="InterPro" id="IPR017989">
    <property type="entry name" value="Ribosome_inactivat_1/2"/>
</dbReference>
<dbReference type="InterPro" id="IPR001574">
    <property type="entry name" value="Ribosome_inactivat_prot"/>
</dbReference>
<dbReference type="InterPro" id="IPR017988">
    <property type="entry name" value="Ribosome_inactivat_prot_CS"/>
</dbReference>
<dbReference type="InterPro" id="IPR016138">
    <property type="entry name" value="Ribosome_inactivat_prot_sub1"/>
</dbReference>
<dbReference type="InterPro" id="IPR016139">
    <property type="entry name" value="Ribosome_inactivat_prot_sub2"/>
</dbReference>
<dbReference type="PANTHER" id="PTHR33453">
    <property type="match status" value="1"/>
</dbReference>
<dbReference type="PANTHER" id="PTHR33453:SF34">
    <property type="entry name" value="RIBOSOME-INACTIVATING PROTEIN"/>
    <property type="match status" value="1"/>
</dbReference>
<dbReference type="Pfam" id="PF00161">
    <property type="entry name" value="RIP"/>
    <property type="match status" value="1"/>
</dbReference>
<dbReference type="PRINTS" id="PR00396">
    <property type="entry name" value="SHIGARICIN"/>
</dbReference>
<dbReference type="SUPFAM" id="SSF56371">
    <property type="entry name" value="Ribosome inactivating proteins (RIP)"/>
    <property type="match status" value="1"/>
</dbReference>
<reference key="1">
    <citation type="journal article" date="2022" name="Toxins">
        <title>Sapovaccarin-S1 and -S2, Two Type I RIP Isoforms from the Seeds of Saponaria vaccaria L.</title>
        <authorList>
            <person name="Schlaak L."/>
            <person name="Weise C."/>
            <person name="Kuropka B."/>
            <person name="Weng A."/>
        </authorList>
    </citation>
    <scope>NUCLEOTIDE SEQUENCE [GENOMIC DNA] OF 6-247</scope>
    <scope>PROTEIN SEQUENCE OF 1-5; 14-28; 34-48; 54-60; 88-101; 127-137 AND 228-254</scope>
    <scope>FUNCTION</scope>
    <scope>CATALYTIC ACTIVITY</scope>
    <scope>TISSUE SPECIFICITY</scope>
    <scope>MASS SPECTROMETRY</scope>
</reference>
<feature type="chain" id="PRO_0000456722" description="rRNA N-glycosylase sapovaccarin-S2">
    <location>
        <begin position="1"/>
        <end position="254"/>
    </location>
</feature>
<proteinExistence type="evidence at protein level"/>
<name>RIP2_GYPVA</name>
<protein>
    <recommendedName>
        <fullName evidence="4">rRNA N-glycosylase sapovaccarin-S2</fullName>
        <ecNumber evidence="2">3.2.2.22</ecNumber>
    </recommendedName>
    <alternativeName>
        <fullName evidence="3">Ribosome-inactivating protein sapovaccarin-S2</fullName>
        <shortName evidence="3">RIP sapovaccarin-S2</shortName>
    </alternativeName>
    <alternativeName>
        <fullName evidence="4">rRNA N-glycosidase</fullName>
    </alternativeName>
</protein>